<comment type="subcellular location">
    <subcellularLocation>
        <location evidence="2">Membrane</location>
        <topology evidence="2">Single-pass membrane protein</topology>
    </subcellularLocation>
</comment>
<name>Y3395_MYCTU</name>
<organism>
    <name type="scientific">Mycobacterium tuberculosis (strain ATCC 25618 / H37Rv)</name>
    <dbReference type="NCBI Taxonomy" id="83332"/>
    <lineage>
        <taxon>Bacteria</taxon>
        <taxon>Bacillati</taxon>
        <taxon>Actinomycetota</taxon>
        <taxon>Actinomycetes</taxon>
        <taxon>Mycobacteriales</taxon>
        <taxon>Mycobacteriaceae</taxon>
        <taxon>Mycobacterium</taxon>
        <taxon>Mycobacterium tuberculosis complex</taxon>
    </lineage>
</organism>
<dbReference type="EMBL" id="AL123456">
    <property type="protein sequence ID" value="CCP46216.1"/>
    <property type="molecule type" value="Genomic_DNA"/>
</dbReference>
<dbReference type="PIR" id="B70975">
    <property type="entry name" value="B70975"/>
</dbReference>
<dbReference type="RefSeq" id="NP_217912.2">
    <property type="nucleotide sequence ID" value="NC_000962.3"/>
</dbReference>
<dbReference type="RefSeq" id="WP_003900043.1">
    <property type="nucleotide sequence ID" value="NZ_NVQJ01000027.1"/>
</dbReference>
<dbReference type="SMR" id="P9WKZ9"/>
<dbReference type="STRING" id="83332.Rv3395c"/>
<dbReference type="PaxDb" id="83332-Rv3395c"/>
<dbReference type="DNASU" id="887960"/>
<dbReference type="GeneID" id="887960"/>
<dbReference type="KEGG" id="mtu:Rv3395c"/>
<dbReference type="KEGG" id="mtv:RVBD_3395c"/>
<dbReference type="TubercuList" id="Rv3395c"/>
<dbReference type="eggNOG" id="COG4544">
    <property type="taxonomic scope" value="Bacteria"/>
</dbReference>
<dbReference type="InParanoid" id="P9WKZ9"/>
<dbReference type="OrthoDB" id="4451283at2"/>
<dbReference type="Proteomes" id="UP000001584">
    <property type="component" value="Chromosome"/>
</dbReference>
<dbReference type="GO" id="GO:0016020">
    <property type="term" value="C:membrane"/>
    <property type="evidence" value="ECO:0007669"/>
    <property type="project" value="UniProtKB-SubCell"/>
</dbReference>
<dbReference type="GO" id="GO:0006281">
    <property type="term" value="P:DNA repair"/>
    <property type="evidence" value="ECO:0000314"/>
    <property type="project" value="MTBBASE"/>
</dbReference>
<protein>
    <recommendedName>
        <fullName>Uncharacterized protein Rv3395c</fullName>
    </recommendedName>
</protein>
<proteinExistence type="evidence at protein level"/>
<sequence length="204" mass="20793">MTAAFASDQRLENGAEQLESLRRQMALLSEKVSGGPSRSGDLVPAGPVSLPPGTVGVLSGARSLLLSMVASVTAAGGNAAIVGQPDIGLLAAVEMGADLSRLAVIPDPGTDPVEVAAVLIDGMDLVVLGLGGRRVTRARARAVVARARQKGCTLLVTDGDWQGVSTRLAARVCGYEITPALRGVPTPGLGRISGVRLQINGRGR</sequence>
<gene>
    <name type="ordered locus">Rv3395c</name>
    <name type="ORF">MTCY78.33</name>
</gene>
<reference key="1">
    <citation type="journal article" date="1998" name="Nature">
        <title>Deciphering the biology of Mycobacterium tuberculosis from the complete genome sequence.</title>
        <authorList>
            <person name="Cole S.T."/>
            <person name="Brosch R."/>
            <person name="Parkhill J."/>
            <person name="Garnier T."/>
            <person name="Churcher C.M."/>
            <person name="Harris D.E."/>
            <person name="Gordon S.V."/>
            <person name="Eiglmeier K."/>
            <person name="Gas S."/>
            <person name="Barry C.E. III"/>
            <person name="Tekaia F."/>
            <person name="Badcock K."/>
            <person name="Basham D."/>
            <person name="Brown D."/>
            <person name="Chillingworth T."/>
            <person name="Connor R."/>
            <person name="Davies R.M."/>
            <person name="Devlin K."/>
            <person name="Feltwell T."/>
            <person name="Gentles S."/>
            <person name="Hamlin N."/>
            <person name="Holroyd S."/>
            <person name="Hornsby T."/>
            <person name="Jagels K."/>
            <person name="Krogh A."/>
            <person name="McLean J."/>
            <person name="Moule S."/>
            <person name="Murphy L.D."/>
            <person name="Oliver S."/>
            <person name="Osborne J."/>
            <person name="Quail M.A."/>
            <person name="Rajandream M.A."/>
            <person name="Rogers J."/>
            <person name="Rutter S."/>
            <person name="Seeger K."/>
            <person name="Skelton S."/>
            <person name="Squares S."/>
            <person name="Squares R."/>
            <person name="Sulston J.E."/>
            <person name="Taylor K."/>
            <person name="Whitehead S."/>
            <person name="Barrell B.G."/>
        </authorList>
    </citation>
    <scope>NUCLEOTIDE SEQUENCE [LARGE SCALE GENOMIC DNA]</scope>
    <source>
        <strain>ATCC 25618 / H37Rv</strain>
    </source>
</reference>
<reference key="2">
    <citation type="journal article" date="2011" name="Mol. Cell. Proteomics">
        <title>Proteogenomic analysis of Mycobacterium tuberculosis by high resolution mass spectrometry.</title>
        <authorList>
            <person name="Kelkar D.S."/>
            <person name="Kumar D."/>
            <person name="Kumar P."/>
            <person name="Balakrishnan L."/>
            <person name="Muthusamy B."/>
            <person name="Yadav A.K."/>
            <person name="Shrivastava P."/>
            <person name="Marimuthu A."/>
            <person name="Anand S."/>
            <person name="Sundaram H."/>
            <person name="Kingsbury R."/>
            <person name="Harsha H.C."/>
            <person name="Nair B."/>
            <person name="Prasad T.S."/>
            <person name="Chauhan D.S."/>
            <person name="Katoch K."/>
            <person name="Katoch V.M."/>
            <person name="Kumar P."/>
            <person name="Chaerkady R."/>
            <person name="Ramachandran S."/>
            <person name="Dash D."/>
            <person name="Pandey A."/>
        </authorList>
    </citation>
    <scope>IDENTIFICATION BY MASS SPECTROMETRY [LARGE SCALE ANALYSIS]</scope>
    <source>
        <strain>ATCC 25618 / H37Rv</strain>
    </source>
</reference>
<feature type="chain" id="PRO_0000104116" description="Uncharacterized protein Rv3395c">
    <location>
        <begin position="1"/>
        <end position="204"/>
    </location>
</feature>
<feature type="transmembrane region" description="Helical" evidence="1">
    <location>
        <begin position="63"/>
        <end position="83"/>
    </location>
</feature>
<evidence type="ECO:0000255" key="1"/>
<evidence type="ECO:0000305" key="2"/>
<keyword id="KW-0472">Membrane</keyword>
<keyword id="KW-1185">Reference proteome</keyword>
<keyword id="KW-0812">Transmembrane</keyword>
<keyword id="KW-1133">Transmembrane helix</keyword>
<accession>P9WKZ9</accession>
<accession>L0TF94</accession>
<accession>O50420</accession>
<accession>Q50730</accession>